<sequence>METIAKHRHARSSAQKVRLVADLIRGKKVSQALDILTYTNKKAAVLVKKVLESAIANAEHNDGADIDDLKVTKIFVDEGPSMKRIMPRAKGRADRILKRTSHITVVVSDR</sequence>
<comment type="function">
    <text evidence="1">This protein binds specifically to 23S rRNA; its binding is stimulated by other ribosomal proteins, e.g. L4, L17, and L20. It is important during the early stages of 50S assembly. It makes multiple contacts with different domains of the 23S rRNA in the assembled 50S subunit and ribosome (By similarity).</text>
</comment>
<comment type="function">
    <text evidence="1">The globular domain of the protein is located near the polypeptide exit tunnel on the outside of the subunit, while an extended beta-hairpin is found that lines the wall of the exit tunnel in the center of the 70S ribosome.</text>
</comment>
<comment type="subunit">
    <text evidence="1">Part of the 50S ribosomal subunit.</text>
</comment>
<comment type="similarity">
    <text evidence="1">Belongs to the universal ribosomal protein uL22 family.</text>
</comment>
<keyword id="KW-0687">Ribonucleoprotein</keyword>
<keyword id="KW-0689">Ribosomal protein</keyword>
<keyword id="KW-0694">RNA-binding</keyword>
<keyword id="KW-0699">rRNA-binding</keyword>
<evidence type="ECO:0000255" key="1">
    <source>
        <dbReference type="HAMAP-Rule" id="MF_01331"/>
    </source>
</evidence>
<evidence type="ECO:0000305" key="2"/>
<protein>
    <recommendedName>
        <fullName evidence="1">Large ribosomal subunit protein uL22</fullName>
    </recommendedName>
    <alternativeName>
        <fullName evidence="2">50S ribosomal protein L22</fullName>
    </alternativeName>
</protein>
<feature type="chain" id="PRO_1000142259" description="Large ribosomal subunit protein uL22">
    <location>
        <begin position="1"/>
        <end position="110"/>
    </location>
</feature>
<name>RL22_ECOLU</name>
<gene>
    <name evidence="1" type="primary">rplV</name>
    <name type="ordered locus">ECUMN_3788</name>
</gene>
<organism>
    <name type="scientific">Escherichia coli O17:K52:H18 (strain UMN026 / ExPEC)</name>
    <dbReference type="NCBI Taxonomy" id="585056"/>
    <lineage>
        <taxon>Bacteria</taxon>
        <taxon>Pseudomonadati</taxon>
        <taxon>Pseudomonadota</taxon>
        <taxon>Gammaproteobacteria</taxon>
        <taxon>Enterobacterales</taxon>
        <taxon>Enterobacteriaceae</taxon>
        <taxon>Escherichia</taxon>
    </lineage>
</organism>
<accession>B7NDT6</accession>
<reference key="1">
    <citation type="journal article" date="2009" name="PLoS Genet.">
        <title>Organised genome dynamics in the Escherichia coli species results in highly diverse adaptive paths.</title>
        <authorList>
            <person name="Touchon M."/>
            <person name="Hoede C."/>
            <person name="Tenaillon O."/>
            <person name="Barbe V."/>
            <person name="Baeriswyl S."/>
            <person name="Bidet P."/>
            <person name="Bingen E."/>
            <person name="Bonacorsi S."/>
            <person name="Bouchier C."/>
            <person name="Bouvet O."/>
            <person name="Calteau A."/>
            <person name="Chiapello H."/>
            <person name="Clermont O."/>
            <person name="Cruveiller S."/>
            <person name="Danchin A."/>
            <person name="Diard M."/>
            <person name="Dossat C."/>
            <person name="Karoui M.E."/>
            <person name="Frapy E."/>
            <person name="Garry L."/>
            <person name="Ghigo J.M."/>
            <person name="Gilles A.M."/>
            <person name="Johnson J."/>
            <person name="Le Bouguenec C."/>
            <person name="Lescat M."/>
            <person name="Mangenot S."/>
            <person name="Martinez-Jehanne V."/>
            <person name="Matic I."/>
            <person name="Nassif X."/>
            <person name="Oztas S."/>
            <person name="Petit M.A."/>
            <person name="Pichon C."/>
            <person name="Rouy Z."/>
            <person name="Ruf C.S."/>
            <person name="Schneider D."/>
            <person name="Tourret J."/>
            <person name="Vacherie B."/>
            <person name="Vallenet D."/>
            <person name="Medigue C."/>
            <person name="Rocha E.P.C."/>
            <person name="Denamur E."/>
        </authorList>
    </citation>
    <scope>NUCLEOTIDE SEQUENCE [LARGE SCALE GENOMIC DNA]</scope>
    <source>
        <strain>UMN026 / ExPEC</strain>
    </source>
</reference>
<dbReference type="EMBL" id="CU928163">
    <property type="protein sequence ID" value="CAR14936.1"/>
    <property type="molecule type" value="Genomic_DNA"/>
</dbReference>
<dbReference type="RefSeq" id="WP_000447529.1">
    <property type="nucleotide sequence ID" value="NC_011751.1"/>
</dbReference>
<dbReference type="RefSeq" id="YP_002414441.1">
    <property type="nucleotide sequence ID" value="NC_011751.1"/>
</dbReference>
<dbReference type="SMR" id="B7NDT6"/>
<dbReference type="STRING" id="585056.ECUMN_3788"/>
<dbReference type="GeneID" id="93778672"/>
<dbReference type="KEGG" id="eum:ECUMN_3788"/>
<dbReference type="PATRIC" id="fig|585056.7.peg.3963"/>
<dbReference type="HOGENOM" id="CLU_083987_3_3_6"/>
<dbReference type="PRO" id="PR:B7NDT6"/>
<dbReference type="Proteomes" id="UP000007097">
    <property type="component" value="Chromosome"/>
</dbReference>
<dbReference type="GO" id="GO:0022625">
    <property type="term" value="C:cytosolic large ribosomal subunit"/>
    <property type="evidence" value="ECO:0007669"/>
    <property type="project" value="TreeGrafter"/>
</dbReference>
<dbReference type="GO" id="GO:0019843">
    <property type="term" value="F:rRNA binding"/>
    <property type="evidence" value="ECO:0007669"/>
    <property type="project" value="UniProtKB-UniRule"/>
</dbReference>
<dbReference type="GO" id="GO:0003735">
    <property type="term" value="F:structural constituent of ribosome"/>
    <property type="evidence" value="ECO:0007669"/>
    <property type="project" value="InterPro"/>
</dbReference>
<dbReference type="GO" id="GO:0006412">
    <property type="term" value="P:translation"/>
    <property type="evidence" value="ECO:0007669"/>
    <property type="project" value="UniProtKB-UniRule"/>
</dbReference>
<dbReference type="CDD" id="cd00336">
    <property type="entry name" value="Ribosomal_L22"/>
    <property type="match status" value="1"/>
</dbReference>
<dbReference type="FunFam" id="3.90.470.10:FF:000001">
    <property type="entry name" value="50S ribosomal protein L22"/>
    <property type="match status" value="1"/>
</dbReference>
<dbReference type="Gene3D" id="3.90.470.10">
    <property type="entry name" value="Ribosomal protein L22/L17"/>
    <property type="match status" value="1"/>
</dbReference>
<dbReference type="HAMAP" id="MF_01331_B">
    <property type="entry name" value="Ribosomal_uL22_B"/>
    <property type="match status" value="1"/>
</dbReference>
<dbReference type="InterPro" id="IPR001063">
    <property type="entry name" value="Ribosomal_uL22"/>
</dbReference>
<dbReference type="InterPro" id="IPR005727">
    <property type="entry name" value="Ribosomal_uL22_bac/chlpt-type"/>
</dbReference>
<dbReference type="InterPro" id="IPR047867">
    <property type="entry name" value="Ribosomal_uL22_bac/org-type"/>
</dbReference>
<dbReference type="InterPro" id="IPR018260">
    <property type="entry name" value="Ribosomal_uL22_CS"/>
</dbReference>
<dbReference type="InterPro" id="IPR036394">
    <property type="entry name" value="Ribosomal_uL22_sf"/>
</dbReference>
<dbReference type="NCBIfam" id="TIGR01044">
    <property type="entry name" value="rplV_bact"/>
    <property type="match status" value="1"/>
</dbReference>
<dbReference type="PANTHER" id="PTHR13501">
    <property type="entry name" value="CHLOROPLAST 50S RIBOSOMAL PROTEIN L22-RELATED"/>
    <property type="match status" value="1"/>
</dbReference>
<dbReference type="PANTHER" id="PTHR13501:SF8">
    <property type="entry name" value="LARGE RIBOSOMAL SUBUNIT PROTEIN UL22M"/>
    <property type="match status" value="1"/>
</dbReference>
<dbReference type="Pfam" id="PF00237">
    <property type="entry name" value="Ribosomal_L22"/>
    <property type="match status" value="1"/>
</dbReference>
<dbReference type="SUPFAM" id="SSF54843">
    <property type="entry name" value="Ribosomal protein L22"/>
    <property type="match status" value="1"/>
</dbReference>
<dbReference type="PROSITE" id="PS00464">
    <property type="entry name" value="RIBOSOMAL_L22"/>
    <property type="match status" value="1"/>
</dbReference>
<proteinExistence type="inferred from homology"/>